<sequence length="698" mass="75207">MAAAGGLPASATLLLLVIAAVAVAPLASAVRPVSDAHRSAAAELFAASPDGSFGDLETTYEAVRTFQILGVEKDKGLIGKACKFAAEKLASSSSSPAKDLFHAARISGVLKCSVDSGVYDDVATRLKAVIKDTNSLLELYYSVGGLLSIKEQGHNVVLPDADNTFHAIKALSQSDGRWRYDTNSAESSTFAAGIALEALSAVISLADSEVDSSMIAVVKNDIVKLFDTIKSYDDGTFYFDEKHVDAAEYKGPITTSASVVRGVTSFAAVASGKLNIPGEKILGLAKFFLGIGLPGSAKDCFNQIESLSFLENNRVFVPLVLSLPSKVFSLTSKDQLKVEVTTVFGSAAPPLRVNLVQVLGSDSKVITTETKELQFDLDNNVHYLDIAPLKIDVGKYSLVFEISLQEQEHETIYATGGTNTEAIFVTGLIKVDKAEIGISDNDAGTVESVQKIDLQKDTSVSLSANHLQKLRLSFQLSTPLGKTFKPHQVFLKLKHDESKVEHLFVVPGSARQFKIVLDFLGLVEKFYYLSGRYDLELAVGDAAMENSFLRALGHIELDLPEAPEKAPKPPAQAVDPFSKFGPKKEISHIFRSPEKRPPKELSFAFTGLTLLPIVGFLIGLMRLGVNLKNFPSLPAPAAFASLFHAGIGAVLLLYVLFWIKLDLFTTLKYLSFLGVFLVFVGHRALSYLSSTSAKQKTA</sequence>
<keyword id="KW-0256">Endoplasmic reticulum</keyword>
<keyword id="KW-0472">Membrane</keyword>
<keyword id="KW-1185">Reference proteome</keyword>
<keyword id="KW-0732">Signal</keyword>
<keyword id="KW-0812">Transmembrane</keyword>
<keyword id="KW-1133">Transmembrane helix</keyword>
<accession>Q5N7W3</accession>
<accession>A0A0P0VBZ6</accession>
<proteinExistence type="evidence at transcript level"/>
<dbReference type="EMBL" id="AP003436">
    <property type="protein sequence ID" value="BAD82429.1"/>
    <property type="molecule type" value="Genomic_DNA"/>
</dbReference>
<dbReference type="EMBL" id="AP008207">
    <property type="protein sequence ID" value="BAF07073.1"/>
    <property type="molecule type" value="Genomic_DNA"/>
</dbReference>
<dbReference type="EMBL" id="AP014957">
    <property type="protein sequence ID" value="BAS75839.1"/>
    <property type="molecule type" value="Genomic_DNA"/>
</dbReference>
<dbReference type="EMBL" id="AK101333">
    <property type="protein sequence ID" value="BAG95014.1"/>
    <property type="molecule type" value="mRNA"/>
</dbReference>
<dbReference type="RefSeq" id="XP_015613641.1">
    <property type="nucleotide sequence ID" value="XM_015758155.1"/>
</dbReference>
<dbReference type="SMR" id="Q5N7W3"/>
<dbReference type="FunCoup" id="Q5N7W3">
    <property type="interactions" value="3016"/>
</dbReference>
<dbReference type="STRING" id="39947.Q5N7W3"/>
<dbReference type="PaxDb" id="39947-Q5N7W3"/>
<dbReference type="EnsemblPlants" id="Os01t0911200-01">
    <property type="protein sequence ID" value="Os01t0911200-01"/>
    <property type="gene ID" value="Os01g0911200"/>
</dbReference>
<dbReference type="Gramene" id="Os01t0911200-01">
    <property type="protein sequence ID" value="Os01t0911200-01"/>
    <property type="gene ID" value="Os01g0911200"/>
</dbReference>
<dbReference type="KEGG" id="dosa:Os01g0911200"/>
<dbReference type="eggNOG" id="KOG2447">
    <property type="taxonomic scope" value="Eukaryota"/>
</dbReference>
<dbReference type="HOGENOM" id="CLU_017104_1_0_1"/>
<dbReference type="InParanoid" id="Q5N7W3"/>
<dbReference type="OMA" id="QEHETIY"/>
<dbReference type="OrthoDB" id="432292at2759"/>
<dbReference type="UniPathway" id="UPA00378"/>
<dbReference type="Proteomes" id="UP000000763">
    <property type="component" value="Chromosome 1"/>
</dbReference>
<dbReference type="Proteomes" id="UP000059680">
    <property type="component" value="Chromosome 1"/>
</dbReference>
<dbReference type="GO" id="GO:0008250">
    <property type="term" value="C:oligosaccharyltransferase complex"/>
    <property type="evidence" value="ECO:0000318"/>
    <property type="project" value="GO_Central"/>
</dbReference>
<dbReference type="GO" id="GO:0006487">
    <property type="term" value="P:protein N-linked glycosylation"/>
    <property type="evidence" value="ECO:0000318"/>
    <property type="project" value="GO_Central"/>
</dbReference>
<dbReference type="GO" id="GO:0009409">
    <property type="term" value="P:response to cold"/>
    <property type="evidence" value="ECO:0007669"/>
    <property type="project" value="EnsemblPlants"/>
</dbReference>
<dbReference type="InterPro" id="IPR055375">
    <property type="entry name" value="Ribophorin_II_2nd"/>
</dbReference>
<dbReference type="InterPro" id="IPR055374">
    <property type="entry name" value="Ribophorin_II_3rd"/>
</dbReference>
<dbReference type="InterPro" id="IPR056790">
    <property type="entry name" value="Ribophorin_II_C"/>
</dbReference>
<dbReference type="InterPro" id="IPR055373">
    <property type="entry name" value="Ribophorin_II_N"/>
</dbReference>
<dbReference type="InterPro" id="IPR008814">
    <property type="entry name" value="Swp1"/>
</dbReference>
<dbReference type="PANTHER" id="PTHR12640:SF0">
    <property type="entry name" value="DOLICHYL-DIPHOSPHOOLIGOSACCHARIDE--PROTEIN GLYCOSYLTRANSFERASE SUBUNIT 2"/>
    <property type="match status" value="1"/>
</dbReference>
<dbReference type="PANTHER" id="PTHR12640">
    <property type="entry name" value="RIBOPHORIN II"/>
    <property type="match status" value="1"/>
</dbReference>
<dbReference type="Pfam" id="PF05817">
    <property type="entry name" value="Ribophorin_II"/>
    <property type="match status" value="1"/>
</dbReference>
<dbReference type="Pfam" id="PF23861">
    <property type="entry name" value="Ribophorin_II_2nd"/>
    <property type="match status" value="1"/>
</dbReference>
<dbReference type="Pfam" id="PF23860">
    <property type="entry name" value="Ribophorin_II_3rd"/>
    <property type="match status" value="1"/>
</dbReference>
<dbReference type="Pfam" id="PF25147">
    <property type="entry name" value="Ribophorin_II_C"/>
    <property type="match status" value="1"/>
</dbReference>
<comment type="function">
    <text evidence="2">Subunit of the oligosaccharyl transferase (OST) complex that catalyzes the initial transfer of a defined glycan (Glc(3)Man(9)GlcNAc(2) in eukaryotes) from the lipid carrier dolichol-pyrophosphate to an asparagine residue within an Asn-X-Ser/Thr consensus motif in nascent polypeptide chains, the first step in protein N-glycosylation. N-glycosylation occurs cotranslationally and the complex associates with the Sec61 complex at the channel-forming translocon complex that mediates protein translocation across the endoplasmic reticulum (ER). All subunits are required for a maximal enzyme activity.</text>
</comment>
<comment type="pathway">
    <text>Protein modification; protein glycosylation.</text>
</comment>
<comment type="subunit">
    <text evidence="2">Component of the oligosaccharyltransferase (OST) complex.</text>
</comment>
<comment type="subcellular location">
    <subcellularLocation>
        <location evidence="1">Endoplasmic reticulum membrane</location>
        <topology evidence="1">Multi-pass membrane protein</topology>
    </subcellularLocation>
</comment>
<comment type="similarity">
    <text evidence="4">Belongs to the SWP1 family.</text>
</comment>
<evidence type="ECO:0000250" key="1"/>
<evidence type="ECO:0000250" key="2">
    <source>
        <dbReference type="UniProtKB" id="Q02795"/>
    </source>
</evidence>
<evidence type="ECO:0000255" key="3"/>
<evidence type="ECO:0000305" key="4"/>
<protein>
    <recommendedName>
        <fullName>Dolichyl-diphosphooligosaccharide--protein glycosyltransferase subunit 2</fullName>
    </recommendedName>
    <alternativeName>
        <fullName>Ribophorin II</fullName>
        <shortName>RPN-II</shortName>
    </alternativeName>
    <alternativeName>
        <fullName>Ribophorin-2</fullName>
    </alternativeName>
</protein>
<feature type="signal peptide" evidence="3">
    <location>
        <begin position="1"/>
        <end position="29"/>
    </location>
</feature>
<feature type="chain" id="PRO_0000420812" description="Dolichyl-diphosphooligosaccharide--protein glycosyltransferase subunit 2">
    <location>
        <begin position="30"/>
        <end position="698"/>
    </location>
</feature>
<feature type="topological domain" description="Lumenal" evidence="3">
    <location>
        <begin position="30"/>
        <end position="600"/>
    </location>
</feature>
<feature type="transmembrane region" description="Helical" evidence="3">
    <location>
        <begin position="601"/>
        <end position="621"/>
    </location>
</feature>
<feature type="topological domain" description="Cytoplasmic" evidence="3">
    <location>
        <begin position="622"/>
        <end position="638"/>
    </location>
</feature>
<feature type="transmembrane region" description="Helical" evidence="3">
    <location>
        <begin position="639"/>
        <end position="659"/>
    </location>
</feature>
<feature type="topological domain" description="Lumenal" evidence="3">
    <location>
        <position position="660"/>
    </location>
</feature>
<feature type="transmembrane region" description="Helical" evidence="3">
    <location>
        <begin position="661"/>
        <end position="681"/>
    </location>
</feature>
<feature type="topological domain" description="Cytoplasmic" evidence="3">
    <location>
        <begin position="682"/>
        <end position="698"/>
    </location>
</feature>
<reference key="1">
    <citation type="journal article" date="2002" name="Nature">
        <title>The genome sequence and structure of rice chromosome 1.</title>
        <authorList>
            <person name="Sasaki T."/>
            <person name="Matsumoto T."/>
            <person name="Yamamoto K."/>
            <person name="Sakata K."/>
            <person name="Baba T."/>
            <person name="Katayose Y."/>
            <person name="Wu J."/>
            <person name="Niimura Y."/>
            <person name="Cheng Z."/>
            <person name="Nagamura Y."/>
            <person name="Antonio B.A."/>
            <person name="Kanamori H."/>
            <person name="Hosokawa S."/>
            <person name="Masukawa M."/>
            <person name="Arikawa K."/>
            <person name="Chiden Y."/>
            <person name="Hayashi M."/>
            <person name="Okamoto M."/>
            <person name="Ando T."/>
            <person name="Aoki H."/>
            <person name="Arita K."/>
            <person name="Hamada M."/>
            <person name="Harada C."/>
            <person name="Hijishita S."/>
            <person name="Honda M."/>
            <person name="Ichikawa Y."/>
            <person name="Idonuma A."/>
            <person name="Iijima M."/>
            <person name="Ikeda M."/>
            <person name="Ikeno M."/>
            <person name="Ito S."/>
            <person name="Ito T."/>
            <person name="Ito Y."/>
            <person name="Ito Y."/>
            <person name="Iwabuchi A."/>
            <person name="Kamiya K."/>
            <person name="Karasawa W."/>
            <person name="Katagiri S."/>
            <person name="Kikuta A."/>
            <person name="Kobayashi N."/>
            <person name="Kono I."/>
            <person name="Machita K."/>
            <person name="Maehara T."/>
            <person name="Mizuno H."/>
            <person name="Mizubayashi T."/>
            <person name="Mukai Y."/>
            <person name="Nagasaki H."/>
            <person name="Nakashima M."/>
            <person name="Nakama Y."/>
            <person name="Nakamichi Y."/>
            <person name="Nakamura M."/>
            <person name="Namiki N."/>
            <person name="Negishi M."/>
            <person name="Ohta I."/>
            <person name="Ono N."/>
            <person name="Saji S."/>
            <person name="Sakai K."/>
            <person name="Shibata M."/>
            <person name="Shimokawa T."/>
            <person name="Shomura A."/>
            <person name="Song J."/>
            <person name="Takazaki Y."/>
            <person name="Terasawa K."/>
            <person name="Tsuji K."/>
            <person name="Waki K."/>
            <person name="Yamagata H."/>
            <person name="Yamane H."/>
            <person name="Yoshiki S."/>
            <person name="Yoshihara R."/>
            <person name="Yukawa K."/>
            <person name="Zhong H."/>
            <person name="Iwama H."/>
            <person name="Endo T."/>
            <person name="Ito H."/>
            <person name="Hahn J.H."/>
            <person name="Kim H.-I."/>
            <person name="Eun M.-Y."/>
            <person name="Yano M."/>
            <person name="Jiang J."/>
            <person name="Gojobori T."/>
        </authorList>
    </citation>
    <scope>NUCLEOTIDE SEQUENCE [LARGE SCALE GENOMIC DNA]</scope>
    <source>
        <strain>cv. Nipponbare</strain>
    </source>
</reference>
<reference key="2">
    <citation type="journal article" date="2005" name="Nature">
        <title>The map-based sequence of the rice genome.</title>
        <authorList>
            <consortium name="International rice genome sequencing project (IRGSP)"/>
        </authorList>
    </citation>
    <scope>NUCLEOTIDE SEQUENCE [LARGE SCALE GENOMIC DNA]</scope>
    <source>
        <strain>cv. Nipponbare</strain>
    </source>
</reference>
<reference key="3">
    <citation type="journal article" date="2008" name="Nucleic Acids Res.">
        <title>The rice annotation project database (RAP-DB): 2008 update.</title>
        <authorList>
            <consortium name="The rice annotation project (RAP)"/>
        </authorList>
    </citation>
    <scope>GENOME REANNOTATION</scope>
    <source>
        <strain>cv. Nipponbare</strain>
    </source>
</reference>
<reference key="4">
    <citation type="journal article" date="2013" name="Rice">
        <title>Improvement of the Oryza sativa Nipponbare reference genome using next generation sequence and optical map data.</title>
        <authorList>
            <person name="Kawahara Y."/>
            <person name="de la Bastide M."/>
            <person name="Hamilton J.P."/>
            <person name="Kanamori H."/>
            <person name="McCombie W.R."/>
            <person name="Ouyang S."/>
            <person name="Schwartz D.C."/>
            <person name="Tanaka T."/>
            <person name="Wu J."/>
            <person name="Zhou S."/>
            <person name="Childs K.L."/>
            <person name="Davidson R.M."/>
            <person name="Lin H."/>
            <person name="Quesada-Ocampo L."/>
            <person name="Vaillancourt B."/>
            <person name="Sakai H."/>
            <person name="Lee S.S."/>
            <person name="Kim J."/>
            <person name="Numa H."/>
            <person name="Itoh T."/>
            <person name="Buell C.R."/>
            <person name="Matsumoto T."/>
        </authorList>
    </citation>
    <scope>GENOME REANNOTATION</scope>
    <source>
        <strain>cv. Nipponbare</strain>
    </source>
</reference>
<reference key="5">
    <citation type="journal article" date="2003" name="Science">
        <title>Collection, mapping, and annotation of over 28,000 cDNA clones from japonica rice.</title>
        <authorList>
            <consortium name="The rice full-length cDNA consortium"/>
        </authorList>
    </citation>
    <scope>NUCLEOTIDE SEQUENCE [LARGE SCALE MRNA]</scope>
    <source>
        <strain>cv. Nipponbare</strain>
    </source>
</reference>
<gene>
    <name type="primary">RPN2</name>
    <name type="ordered locus">Os01g0911200</name>
    <name type="ordered locus">LOC_Os01g68324</name>
    <name type="ORF">P0470A12.10</name>
</gene>
<name>RPN2_ORYSJ</name>
<organism>
    <name type="scientific">Oryza sativa subsp. japonica</name>
    <name type="common">Rice</name>
    <dbReference type="NCBI Taxonomy" id="39947"/>
    <lineage>
        <taxon>Eukaryota</taxon>
        <taxon>Viridiplantae</taxon>
        <taxon>Streptophyta</taxon>
        <taxon>Embryophyta</taxon>
        <taxon>Tracheophyta</taxon>
        <taxon>Spermatophyta</taxon>
        <taxon>Magnoliopsida</taxon>
        <taxon>Liliopsida</taxon>
        <taxon>Poales</taxon>
        <taxon>Poaceae</taxon>
        <taxon>BOP clade</taxon>
        <taxon>Oryzoideae</taxon>
        <taxon>Oryzeae</taxon>
        <taxon>Oryzinae</taxon>
        <taxon>Oryza</taxon>
        <taxon>Oryza sativa</taxon>
    </lineage>
</organism>